<name>CFA52_MACFA</name>
<proteinExistence type="evidence at transcript level"/>
<gene>
    <name evidence="4" type="primary">CFAP52</name>
    <name evidence="4" type="synonym">WDR16</name>
    <name type="ORF">QtsA-15738</name>
</gene>
<keyword id="KW-0966">Cell projection</keyword>
<keyword id="KW-0969">Cilium</keyword>
<keyword id="KW-0963">Cytoplasm</keyword>
<keyword id="KW-0206">Cytoskeleton</keyword>
<keyword id="KW-0282">Flagellum</keyword>
<keyword id="KW-1185">Reference proteome</keyword>
<keyword id="KW-0677">Repeat</keyword>
<keyword id="KW-0853">WD repeat</keyword>
<feature type="chain" id="PRO_0000233154" description="Cilia- and flagella-associated protein 52" evidence="5">
    <location>
        <begin position="1"/>
        <end position="571"/>
    </location>
</feature>
<feature type="repeat" description="WD 1">
    <location>
        <begin position="62"/>
        <end position="106"/>
    </location>
</feature>
<feature type="repeat" description="WD 2">
    <location>
        <begin position="109"/>
        <end position="150"/>
    </location>
</feature>
<feature type="repeat" description="WD 3">
    <location>
        <begin position="156"/>
        <end position="195"/>
    </location>
</feature>
<feature type="repeat" description="WD 4">
    <location>
        <begin position="288"/>
        <end position="327"/>
    </location>
</feature>
<feature type="repeat" description="WD 5">
    <location>
        <begin position="330"/>
        <end position="364"/>
    </location>
</feature>
<feature type="repeat" description="WD 6">
    <location>
        <begin position="366"/>
        <end position="405"/>
    </location>
</feature>
<feature type="repeat" description="WD 7">
    <location>
        <begin position="410"/>
        <end position="449"/>
    </location>
</feature>
<feature type="repeat" description="WD 8">
    <location>
        <begin position="451"/>
        <end position="490"/>
    </location>
</feature>
<feature type="repeat" description="WD 9">
    <location>
        <begin position="494"/>
        <end position="533"/>
    </location>
</feature>
<feature type="repeat" description="WD 10">
    <location>
        <begin position="536"/>
        <end position="571"/>
    </location>
</feature>
<dbReference type="EMBL" id="AB070166">
    <property type="protein sequence ID" value="BAB63111.1"/>
    <property type="molecule type" value="mRNA"/>
</dbReference>
<dbReference type="RefSeq" id="NP_001306317.1">
    <property type="nucleotide sequence ID" value="NM_001319388.1"/>
</dbReference>
<dbReference type="SMR" id="Q95JL5"/>
<dbReference type="STRING" id="9541.ENSMFAP00000031989"/>
<dbReference type="eggNOG" id="KOG0266">
    <property type="taxonomic scope" value="Eukaryota"/>
</dbReference>
<dbReference type="Proteomes" id="UP000233100">
    <property type="component" value="Unplaced"/>
</dbReference>
<dbReference type="GO" id="GO:0160112">
    <property type="term" value="C:axonemal B tubule inner sheath"/>
    <property type="evidence" value="ECO:0000250"/>
    <property type="project" value="UniProtKB"/>
</dbReference>
<dbReference type="GO" id="GO:0005879">
    <property type="term" value="C:axonemal microtubule"/>
    <property type="evidence" value="ECO:0000250"/>
    <property type="project" value="UniProtKB"/>
</dbReference>
<dbReference type="GO" id="GO:0036126">
    <property type="term" value="C:sperm flagellum"/>
    <property type="evidence" value="ECO:0000250"/>
    <property type="project" value="UniProtKB"/>
</dbReference>
<dbReference type="GO" id="GO:0030317">
    <property type="term" value="P:flagellated sperm motility"/>
    <property type="evidence" value="ECO:0000250"/>
    <property type="project" value="UniProtKB"/>
</dbReference>
<dbReference type="FunFam" id="2.130.10.10:FF:001513">
    <property type="entry name" value="Cilia and flagella associated protein 52"/>
    <property type="match status" value="1"/>
</dbReference>
<dbReference type="FunFam" id="2.130.10.10:FF:000173">
    <property type="entry name" value="Cilia- and flagella-associated protein 52"/>
    <property type="match status" value="1"/>
</dbReference>
<dbReference type="FunFam" id="2.130.10.10:FF:000207">
    <property type="entry name" value="Cilia- and flagella-associated protein 52"/>
    <property type="match status" value="1"/>
</dbReference>
<dbReference type="Gene3D" id="2.130.10.10">
    <property type="entry name" value="YVTN repeat-like/Quinoprotein amine dehydrogenase"/>
    <property type="match status" value="3"/>
</dbReference>
<dbReference type="InterPro" id="IPR011047">
    <property type="entry name" value="Quinoprotein_ADH-like_sf"/>
</dbReference>
<dbReference type="InterPro" id="IPR015943">
    <property type="entry name" value="WD40/YVTN_repeat-like_dom_sf"/>
</dbReference>
<dbReference type="InterPro" id="IPR019775">
    <property type="entry name" value="WD40_repeat_CS"/>
</dbReference>
<dbReference type="InterPro" id="IPR001680">
    <property type="entry name" value="WD40_rpt"/>
</dbReference>
<dbReference type="InterPro" id="IPR050630">
    <property type="entry name" value="WD_repeat_EMAP"/>
</dbReference>
<dbReference type="PANTHER" id="PTHR13720:SF14">
    <property type="entry name" value="CILIA- AND FLAGELLA-ASSOCIATED PROTEIN 52"/>
    <property type="match status" value="1"/>
</dbReference>
<dbReference type="PANTHER" id="PTHR13720">
    <property type="entry name" value="WD-40 REPEAT PROTEIN"/>
    <property type="match status" value="1"/>
</dbReference>
<dbReference type="Pfam" id="PF00400">
    <property type="entry name" value="WD40"/>
    <property type="match status" value="6"/>
</dbReference>
<dbReference type="SMART" id="SM00320">
    <property type="entry name" value="WD40"/>
    <property type="match status" value="9"/>
</dbReference>
<dbReference type="SUPFAM" id="SSF50998">
    <property type="entry name" value="Quinoprotein alcohol dehydrogenase-like"/>
    <property type="match status" value="1"/>
</dbReference>
<dbReference type="PROSITE" id="PS00678">
    <property type="entry name" value="WD_REPEATS_1"/>
    <property type="match status" value="1"/>
</dbReference>
<dbReference type="PROSITE" id="PS50082">
    <property type="entry name" value="WD_REPEATS_2"/>
    <property type="match status" value="5"/>
</dbReference>
<dbReference type="PROSITE" id="PS50294">
    <property type="entry name" value="WD_REPEATS_REGION"/>
    <property type="match status" value="2"/>
</dbReference>
<evidence type="ECO:0000250" key="1">
    <source>
        <dbReference type="UniProtKB" id="E1BKF9"/>
    </source>
</evidence>
<evidence type="ECO:0000250" key="2">
    <source>
        <dbReference type="UniProtKB" id="F1SS88"/>
    </source>
</evidence>
<evidence type="ECO:0000250" key="3">
    <source>
        <dbReference type="UniProtKB" id="Q5F201"/>
    </source>
</evidence>
<evidence type="ECO:0000250" key="4">
    <source>
        <dbReference type="UniProtKB" id="Q8N1V2"/>
    </source>
</evidence>
<evidence type="ECO:0000305" key="5"/>
<reference key="1">
    <citation type="journal article" date="2002" name="BMC Genomics">
        <title>Cynomolgus monkey testicular cDNAs for discovery of novel human genes in the human genome sequence.</title>
        <authorList>
            <person name="Osada N."/>
            <person name="Hida M."/>
            <person name="Kusuda J."/>
            <person name="Tanuma R."/>
            <person name="Hirata M."/>
            <person name="Suto Y."/>
            <person name="Hirai M."/>
            <person name="Terao K."/>
            <person name="Sugano S."/>
            <person name="Hashimoto K."/>
        </authorList>
    </citation>
    <scope>NUCLEOTIDE SEQUENCE [LARGE SCALE MRNA]</scope>
    <source>
        <tissue>Testis</tissue>
    </source>
</reference>
<accession>Q95JL5</accession>
<sequence length="571" mass="62672">MDNKISPEAQVAELELDAVIGFNGHVPTGLKCHPDQEHLIFPLGCTILIQAINTQEQNFLQGHGNNVSCLAISRSGRYIASGQVTFMGFKADIILWDYKKRELLARLSLHKGKIEALAFSPNDLYLVSLGGPDDGSVVVWSIAKRDAICGSPAAGLNVGNATNVIFSRCRDEMFVTAGNGTIRVWELDLPNRKIWPTECQTGQMKRIVMSIGMADDDSFFYLGTTTGDILKMNPRTKLLTDAGPAKDKFSLGVSAIRCLKMGGLLVGSGAGLLVFCKSPSYKPIKKIQSQGGITSITLRGEGHQFFVGTEESHIYRVSFTDFKETLIATCHFEAVEDIVFPFGTAELFATCAKKDIRVWHTSSNSAHRIGVTAIATTSDCKRVISGGGEGEVRVWQIGCQTQKLEEALKEHKSSVSCIRVKKNNEECVTASTDGTCIIWDLVRLRRNQMILANTLFQCVCYHPEEFQIITSGTDRKIAYWEVFDGTVIRELEGSLSGSINGMDITQEGVHFVTGGNDHLVKVWDYNEGEVTHVGVGHSGNITRIRISPGNQYIVSVSADGAILRWKYPYTS</sequence>
<comment type="function">
    <text evidence="1 4">Microtubule inner protein (MIP) part of the dynein-decorated doublet microtubules (DMTs) in cilia axoneme (By similarity). Important for proper ciliary and flagellar beating. May act in cooperation with CFAP45 and axonemal dynein subunit DNAH11. May play a role in cell growth and/or survival (By similarity).</text>
</comment>
<comment type="subunit">
    <text evidence="2 3 4">Microtubule inner protein component of sperm flagellar doublet microtubules (By similarity). Interacts with BRCA2 (By similarity). Interacts with the CCT chaperonin complex (By similarity). Interacts with HSP70 (By similarity). Interacts with AK8 (By similarity). Interacts with CFAP45 (By similarity). Interacts with DNAI1 (By similarity). Interacts with IQDC (By similarity).</text>
</comment>
<comment type="subcellular location">
    <subcellularLocation>
        <location evidence="4">Cytoplasm</location>
    </subcellularLocation>
    <subcellularLocation>
        <location evidence="4">Cytoplasm</location>
        <location evidence="4">Cytoskeleton</location>
        <location evidence="4">Cilium axoneme</location>
    </subcellularLocation>
    <subcellularLocation>
        <location evidence="3">Cytoplasm</location>
        <location evidence="3">Cytoskeleton</location>
        <location evidence="3">Flagellum axoneme</location>
    </subcellularLocation>
    <text evidence="4">Located in the proximal region of respiratory cilia.</text>
</comment>
<comment type="similarity">
    <text evidence="5">Belongs to the CFAP52 family.</text>
</comment>
<organism>
    <name type="scientific">Macaca fascicularis</name>
    <name type="common">Crab-eating macaque</name>
    <name type="synonym">Cynomolgus monkey</name>
    <dbReference type="NCBI Taxonomy" id="9541"/>
    <lineage>
        <taxon>Eukaryota</taxon>
        <taxon>Metazoa</taxon>
        <taxon>Chordata</taxon>
        <taxon>Craniata</taxon>
        <taxon>Vertebrata</taxon>
        <taxon>Euteleostomi</taxon>
        <taxon>Mammalia</taxon>
        <taxon>Eutheria</taxon>
        <taxon>Euarchontoglires</taxon>
        <taxon>Primates</taxon>
        <taxon>Haplorrhini</taxon>
        <taxon>Catarrhini</taxon>
        <taxon>Cercopithecidae</taxon>
        <taxon>Cercopithecinae</taxon>
        <taxon>Macaca</taxon>
    </lineage>
</organism>
<protein>
    <recommendedName>
        <fullName evidence="4">Cilia- and flagella-associated protein 52</fullName>
    </recommendedName>
    <alternativeName>
        <fullName evidence="4">WD repeat-containing protein 16</fullName>
    </alternativeName>
</protein>